<evidence type="ECO:0000255" key="1">
    <source>
        <dbReference type="PROSITE-ProRule" id="PRU00625"/>
    </source>
</evidence>
<evidence type="ECO:0000269" key="2">
    <source>
    </source>
</evidence>
<evidence type="ECO:0000303" key="3">
    <source>
    </source>
</evidence>
<evidence type="ECO:0000303" key="4">
    <source>
    </source>
</evidence>
<evidence type="ECO:0000305" key="5"/>
<evidence type="ECO:0000312" key="6">
    <source>
        <dbReference type="Araport" id="AT1G69560"/>
    </source>
</evidence>
<evidence type="ECO:0000312" key="7">
    <source>
        <dbReference type="EMBL" id="AAF24603.1"/>
    </source>
</evidence>
<evidence type="ECO:0000312" key="8">
    <source>
        <dbReference type="EMBL" id="AAG60101.1"/>
    </source>
</evidence>
<dbReference type="EMBL" id="AF249308">
    <property type="protein sequence ID" value="AAF65558.1"/>
    <property type="molecule type" value="mRNA"/>
</dbReference>
<dbReference type="EMBL" id="AC021046">
    <property type="protein sequence ID" value="AAF24603.1"/>
    <property type="molecule type" value="Genomic_DNA"/>
</dbReference>
<dbReference type="EMBL" id="AC073178">
    <property type="protein sequence ID" value="AAG60101.1"/>
    <property type="molecule type" value="Genomic_DNA"/>
</dbReference>
<dbReference type="EMBL" id="CP002684">
    <property type="protein sequence ID" value="AEE34949.1"/>
    <property type="molecule type" value="Genomic_DNA"/>
</dbReference>
<dbReference type="PIR" id="C96717">
    <property type="entry name" value="C96717"/>
</dbReference>
<dbReference type="RefSeq" id="NP_177115.1">
    <property type="nucleotide sequence ID" value="NM_105625.3"/>
</dbReference>
<dbReference type="SMR" id="Q9SEZ4"/>
<dbReference type="IntAct" id="Q9SEZ4">
    <property type="interactions" value="22"/>
</dbReference>
<dbReference type="STRING" id="3702.Q9SEZ4"/>
<dbReference type="PaxDb" id="3702-AT1G69560.1"/>
<dbReference type="EnsemblPlants" id="AT1G69560.1">
    <property type="protein sequence ID" value="AT1G69560.1"/>
    <property type="gene ID" value="AT1G69560"/>
</dbReference>
<dbReference type="GeneID" id="843292"/>
<dbReference type="Gramene" id="AT1G69560.1">
    <property type="protein sequence ID" value="AT1G69560.1"/>
    <property type="gene ID" value="AT1G69560"/>
</dbReference>
<dbReference type="KEGG" id="ath:AT1G69560"/>
<dbReference type="Araport" id="AT1G69560"/>
<dbReference type="TAIR" id="AT1G69560">
    <property type="gene designation" value="MYB105"/>
</dbReference>
<dbReference type="eggNOG" id="KOG0048">
    <property type="taxonomic scope" value="Eukaryota"/>
</dbReference>
<dbReference type="HOGENOM" id="CLU_028567_18_0_1"/>
<dbReference type="InParanoid" id="Q9SEZ4"/>
<dbReference type="PhylomeDB" id="Q9SEZ4"/>
<dbReference type="PRO" id="PR:Q9SEZ4"/>
<dbReference type="Proteomes" id="UP000006548">
    <property type="component" value="Chromosome 1"/>
</dbReference>
<dbReference type="ExpressionAtlas" id="Q9SEZ4">
    <property type="expression patterns" value="baseline and differential"/>
</dbReference>
<dbReference type="GO" id="GO:0005634">
    <property type="term" value="C:nucleus"/>
    <property type="evidence" value="ECO:0007669"/>
    <property type="project" value="UniProtKB-SubCell"/>
</dbReference>
<dbReference type="GO" id="GO:0003677">
    <property type="term" value="F:DNA binding"/>
    <property type="evidence" value="ECO:0007669"/>
    <property type="project" value="UniProtKB-KW"/>
</dbReference>
<dbReference type="GO" id="GO:0003700">
    <property type="term" value="F:DNA-binding transcription factor activity"/>
    <property type="evidence" value="ECO:0000250"/>
    <property type="project" value="TAIR"/>
</dbReference>
<dbReference type="GO" id="GO:0010199">
    <property type="term" value="P:organ boundary specification between lateral organs and the meristem"/>
    <property type="evidence" value="ECO:0000316"/>
    <property type="project" value="TAIR"/>
</dbReference>
<dbReference type="GO" id="GO:0006355">
    <property type="term" value="P:regulation of DNA-templated transcription"/>
    <property type="evidence" value="ECO:0000304"/>
    <property type="project" value="TAIR"/>
</dbReference>
<dbReference type="CDD" id="cd00167">
    <property type="entry name" value="SANT"/>
    <property type="match status" value="2"/>
</dbReference>
<dbReference type="FunFam" id="1.10.10.60:FF:000060">
    <property type="entry name" value="MYB transcription factor"/>
    <property type="match status" value="1"/>
</dbReference>
<dbReference type="FunFam" id="1.10.10.60:FF:000356">
    <property type="entry name" value="MYB transcription factor"/>
    <property type="match status" value="1"/>
</dbReference>
<dbReference type="Gene3D" id="1.10.10.60">
    <property type="entry name" value="Homeodomain-like"/>
    <property type="match status" value="2"/>
</dbReference>
<dbReference type="InterPro" id="IPR009057">
    <property type="entry name" value="Homeodomain-like_sf"/>
</dbReference>
<dbReference type="InterPro" id="IPR017930">
    <property type="entry name" value="Myb_dom"/>
</dbReference>
<dbReference type="InterPro" id="IPR050560">
    <property type="entry name" value="MYB_TF"/>
</dbReference>
<dbReference type="InterPro" id="IPR001005">
    <property type="entry name" value="SANT/Myb"/>
</dbReference>
<dbReference type="PANTHER" id="PTHR45614">
    <property type="entry name" value="MYB PROTEIN-RELATED"/>
    <property type="match status" value="1"/>
</dbReference>
<dbReference type="PANTHER" id="PTHR45614:SF175">
    <property type="entry name" value="TRANSCRIPTION FACTOR MYB105-RELATED"/>
    <property type="match status" value="1"/>
</dbReference>
<dbReference type="Pfam" id="PF00249">
    <property type="entry name" value="Myb_DNA-binding"/>
    <property type="match status" value="2"/>
</dbReference>
<dbReference type="SMART" id="SM00717">
    <property type="entry name" value="SANT"/>
    <property type="match status" value="2"/>
</dbReference>
<dbReference type="SUPFAM" id="SSF46689">
    <property type="entry name" value="Homeodomain-like"/>
    <property type="match status" value="1"/>
</dbReference>
<dbReference type="PROSITE" id="PS51294">
    <property type="entry name" value="HTH_MYB"/>
    <property type="match status" value="2"/>
</dbReference>
<reference key="1">
    <citation type="journal article" date="2001" name="Curr. Opin. Plant Biol.">
        <title>The R2R3-MYB gene family in Arabidopsis thaliana.</title>
        <authorList>
            <person name="Stracke R."/>
            <person name="Werber M."/>
            <person name="Weisshaar B."/>
        </authorList>
    </citation>
    <scope>NUCLEOTIDE SEQUENCE [MRNA]</scope>
    <scope>GENE FAMILY</scope>
    <scope>NOMENCLATURE</scope>
</reference>
<reference key="2">
    <citation type="journal article" date="2000" name="Nature">
        <title>Sequence and analysis of chromosome 1 of the plant Arabidopsis thaliana.</title>
        <authorList>
            <person name="Theologis A."/>
            <person name="Ecker J.R."/>
            <person name="Palm C.J."/>
            <person name="Federspiel N.A."/>
            <person name="Kaul S."/>
            <person name="White O."/>
            <person name="Alonso J."/>
            <person name="Altafi H."/>
            <person name="Araujo R."/>
            <person name="Bowman C.L."/>
            <person name="Brooks S.Y."/>
            <person name="Buehler E."/>
            <person name="Chan A."/>
            <person name="Chao Q."/>
            <person name="Chen H."/>
            <person name="Cheuk R.F."/>
            <person name="Chin C.W."/>
            <person name="Chung M.K."/>
            <person name="Conn L."/>
            <person name="Conway A.B."/>
            <person name="Conway A.R."/>
            <person name="Creasy T.H."/>
            <person name="Dewar K."/>
            <person name="Dunn P."/>
            <person name="Etgu P."/>
            <person name="Feldblyum T.V."/>
            <person name="Feng J.-D."/>
            <person name="Fong B."/>
            <person name="Fujii C.Y."/>
            <person name="Gill J.E."/>
            <person name="Goldsmith A.D."/>
            <person name="Haas B."/>
            <person name="Hansen N.F."/>
            <person name="Hughes B."/>
            <person name="Huizar L."/>
            <person name="Hunter J.L."/>
            <person name="Jenkins J."/>
            <person name="Johnson-Hopson C."/>
            <person name="Khan S."/>
            <person name="Khaykin E."/>
            <person name="Kim C.J."/>
            <person name="Koo H.L."/>
            <person name="Kremenetskaia I."/>
            <person name="Kurtz D.B."/>
            <person name="Kwan A."/>
            <person name="Lam B."/>
            <person name="Langin-Hooper S."/>
            <person name="Lee A."/>
            <person name="Lee J.M."/>
            <person name="Lenz C.A."/>
            <person name="Li J.H."/>
            <person name="Li Y.-P."/>
            <person name="Lin X."/>
            <person name="Liu S.X."/>
            <person name="Liu Z.A."/>
            <person name="Luros J.S."/>
            <person name="Maiti R."/>
            <person name="Marziali A."/>
            <person name="Militscher J."/>
            <person name="Miranda M."/>
            <person name="Nguyen M."/>
            <person name="Nierman W.C."/>
            <person name="Osborne B.I."/>
            <person name="Pai G."/>
            <person name="Peterson J."/>
            <person name="Pham P.K."/>
            <person name="Rizzo M."/>
            <person name="Rooney T."/>
            <person name="Rowley D."/>
            <person name="Sakano H."/>
            <person name="Salzberg S.L."/>
            <person name="Schwartz J.R."/>
            <person name="Shinn P."/>
            <person name="Southwick A.M."/>
            <person name="Sun H."/>
            <person name="Tallon L.J."/>
            <person name="Tambunga G."/>
            <person name="Toriumi M.J."/>
            <person name="Town C.D."/>
            <person name="Utterback T."/>
            <person name="Van Aken S."/>
            <person name="Vaysberg M."/>
            <person name="Vysotskaia V.S."/>
            <person name="Walker M."/>
            <person name="Wu D."/>
            <person name="Yu G."/>
            <person name="Fraser C.M."/>
            <person name="Venter J.C."/>
            <person name="Davis R.W."/>
        </authorList>
    </citation>
    <scope>NUCLEOTIDE SEQUENCE [LARGE SCALE GENOMIC DNA]</scope>
    <source>
        <strain>cv. Columbia</strain>
    </source>
</reference>
<reference key="3">
    <citation type="journal article" date="2017" name="Plant J.">
        <title>Araport11: a complete reannotation of the Arabidopsis thaliana reference genome.</title>
        <authorList>
            <person name="Cheng C.Y."/>
            <person name="Krishnakumar V."/>
            <person name="Chan A.P."/>
            <person name="Thibaud-Nissen F."/>
            <person name="Schobel S."/>
            <person name="Town C.D."/>
        </authorList>
    </citation>
    <scope>GENOME REANNOTATION</scope>
    <source>
        <strain>cv. Columbia</strain>
    </source>
</reference>
<reference key="4">
    <citation type="journal article" date="2009" name="Development">
        <title>LATERAL ORGAN FUSION1 and LATERAL ORGAN FUSION2 function in lateral organ separation and axillary meristem formation in Arabidopsis.</title>
        <authorList>
            <person name="Lee D.K."/>
            <person name="Geisler M."/>
            <person name="Springer P.S."/>
        </authorList>
    </citation>
    <scope>FUNCTION</scope>
    <scope>TISSUE SPECIFICITY</scope>
    <scope>DISRUPTION PHENOTYPE</scope>
</reference>
<protein>
    <recommendedName>
        <fullName evidence="5">Transcription factor MYB105</fullName>
    </recommendedName>
    <alternativeName>
        <fullName evidence="4">MYB-domain transcription factor LOF2</fullName>
    </alternativeName>
    <alternativeName>
        <fullName evidence="5">Myb-related protein 105</fullName>
        <shortName evidence="3">AtMYB105</shortName>
    </alternativeName>
    <alternativeName>
        <fullName evidence="4">Protein LATERAL ORGAN FUSION 2</fullName>
    </alternativeName>
</protein>
<accession>Q9SEZ4</accession>
<keyword id="KW-0217">Developmental protein</keyword>
<keyword id="KW-0238">DNA-binding</keyword>
<keyword id="KW-0539">Nucleus</keyword>
<keyword id="KW-1185">Reference proteome</keyword>
<keyword id="KW-0677">Repeat</keyword>
<keyword id="KW-0804">Transcription</keyword>
<keyword id="KW-0805">Transcription regulation</keyword>
<gene>
    <name evidence="3" type="primary">MYB105</name>
    <name evidence="4" type="synonym">LOF2</name>
    <name evidence="6" type="ordered locus">At1g69560</name>
    <name evidence="8" type="ORF">F10D13.19</name>
    <name evidence="7" type="ORF">F24J1.31</name>
</gene>
<sequence>MEMVHADVASLSITPCFPSSLSSSSHHHYNQQQHCIMSEDQHHSMDQTTSSDYFSLNIDNAQHLRSYYTSHREEDMNPNLSDYSNCNKKDTTVYRSCGHSSKASVSRGHWRPAEDTKLKELVAVYGPQNWNLIAEKLQGRSGKSCRLRWFNQLDPRINRRAFTEEEEERLMQAHRLYGNKWAMIARLFPGRTDNSVKNHWHVIMARKFREQSSSYRRRKTMVSLKPLINPNPHIFNDFDPTRLALTHLASSDHKQLMLPVPCFPGYDHENESPLMVDMFETQMMVGDYIAWTQEATTFDFLNQTGKSEIFERINEEKKPPFFDFLGLGTV</sequence>
<name>MY105_ARATH</name>
<comment type="function">
    <text evidence="2">Probable transcription factor that involved in boundary specification, meristem initiation and maintenance, and organ patterning. Functions in both lateral organ separation and axillary meristem formation.</text>
</comment>
<comment type="interaction">
    <interactant intactId="EBI-15202260">
        <id>Q9SEZ4</id>
    </interactant>
    <interactant intactId="EBI-4426649">
        <id>Q17TI5</id>
        <label>BRX</label>
    </interactant>
    <organismsDiffer>false</organismsDiffer>
    <experiments>3</experiments>
</comment>
<comment type="interaction">
    <interactant intactId="EBI-15202260">
        <id>Q9SEZ4</id>
    </interactant>
    <interactant intactId="EBI-16419382">
        <id>Q9FKB0</id>
        <label>LSM5</label>
    </interactant>
    <organismsDiffer>false</organismsDiffer>
    <experiments>3</experiments>
</comment>
<comment type="interaction">
    <interactant intactId="EBI-15202260">
        <id>Q9SEZ4</id>
    </interactant>
    <interactant intactId="EBI-15192325">
        <id>Q8LPR5</id>
        <label>TCP4</label>
    </interactant>
    <organismsDiffer>false</organismsDiffer>
    <experiments>3</experiments>
</comment>
<comment type="subcellular location">
    <subcellularLocation>
        <location evidence="1">Nucleus</location>
    </subcellularLocation>
</comment>
<comment type="tissue specificity">
    <text evidence="2">Expressed in organ boundaries.</text>
</comment>
<comment type="disruption phenotype">
    <text evidence="2">No visible phenotype under normal growth conditions, but the double mutants lof1 and lof2 exhibit enhanced phenotypes relative to lof1.</text>
</comment>
<proteinExistence type="evidence at protein level"/>
<feature type="chain" id="PRO_0000439514" description="Transcription factor MYB105">
    <location>
        <begin position="1"/>
        <end position="330"/>
    </location>
</feature>
<feature type="domain" description="HTH myb-type 1" evidence="1">
    <location>
        <begin position="102"/>
        <end position="153"/>
    </location>
</feature>
<feature type="domain" description="HTH myb-type 2" evidence="1">
    <location>
        <begin position="154"/>
        <end position="208"/>
    </location>
</feature>
<feature type="DNA-binding region" description="H-T-H motif" evidence="1">
    <location>
        <begin position="130"/>
        <end position="152"/>
    </location>
</feature>
<feature type="DNA-binding region" description="H-T-H motif" evidence="1">
    <location>
        <begin position="181"/>
        <end position="204"/>
    </location>
</feature>
<organism>
    <name type="scientific">Arabidopsis thaliana</name>
    <name type="common">Mouse-ear cress</name>
    <dbReference type="NCBI Taxonomy" id="3702"/>
    <lineage>
        <taxon>Eukaryota</taxon>
        <taxon>Viridiplantae</taxon>
        <taxon>Streptophyta</taxon>
        <taxon>Embryophyta</taxon>
        <taxon>Tracheophyta</taxon>
        <taxon>Spermatophyta</taxon>
        <taxon>Magnoliopsida</taxon>
        <taxon>eudicotyledons</taxon>
        <taxon>Gunneridae</taxon>
        <taxon>Pentapetalae</taxon>
        <taxon>rosids</taxon>
        <taxon>malvids</taxon>
        <taxon>Brassicales</taxon>
        <taxon>Brassicaceae</taxon>
        <taxon>Camelineae</taxon>
        <taxon>Arabidopsis</taxon>
    </lineage>
</organism>